<proteinExistence type="evidence at protein level"/>
<evidence type="ECO:0000250" key="1">
    <source>
        <dbReference type="UniProtKB" id="Q12494"/>
    </source>
</evidence>
<evidence type="ECO:0000255" key="2"/>
<evidence type="ECO:0000256" key="3">
    <source>
        <dbReference type="SAM" id="MobiDB-lite"/>
    </source>
</evidence>
<evidence type="ECO:0000269" key="4">
    <source>
    </source>
</evidence>
<evidence type="ECO:0000269" key="5">
    <source>
    </source>
</evidence>
<evidence type="ECO:0000305" key="6"/>
<evidence type="ECO:0000312" key="7">
    <source>
        <dbReference type="EMBL" id="CAA20701.1"/>
    </source>
</evidence>
<name>YCZ8_SCHPO</name>
<comment type="subcellular location">
    <subcellularLocation>
        <location evidence="4">Cytoplasm</location>
    </subcellularLocation>
</comment>
<comment type="similarity">
    <text evidence="2">Belongs to the inositol phosphokinase (IPK) family.</text>
</comment>
<sequence>MQNAPKCYLPNSRKGRDVNFHDRGPETLKCLYDESEDNNNFTMHSESIGPKSLDSLSPRRLSNYSSAVDPRTTSLEDVPRLILTRSNSQEQTPLRTHTPVEYMSDSIHKSLADLQLGGSSYSVAESPVPVLQSSAVSEADDMASAHSAHPSRKASRSLRLFESSTSNNLETGNSTNTALHNVSSPLESVSERLSKSGSPSVGAQHDLDEVISEKDTSLSRRSSRGRSSAPKRRKDSGSSKTTATYIPHNPSKKSSQHLPLLPDASFELERSVSRSYQSPASTPRSSVSSVSSSPPEDHPFFHWNVDYPVTVRLEPFKHQVGGHTAFFRFSKRAVCKPLTRNENTFYETIEACHPELLPFIPKYIGVLNVTHTITKTEENDSTTEYVNTESSSKTPAPHKHTFNSCYQKKDYGYIPEVSVEQNRHIFPEWMLPDKRSHSYGSPKSLHHKSSSAGERPVSPTFVADIPPKTPWGTTLINRKLREEVLREVFAPKHARRRLGTRFHSRSSHRPSVFRDNSVAFGQLDNGNTSSRARDKDADPNKSLSCSVEDKHYDLHSAVAEENEEVDEELLNVPSNNQGKSYRRFSSDAVWEEPESNEFPRVSGTMEDYDSRESTGHTIKELRSTPNSHGTVPDDSIFAMDNEENSELPPPLEPAEIGDPFRSVNDPRRVLSLPHMASADEDHRIPASDNQNNNNNDANALAENSESQHSTQIERYIVIEDLTSGMKRPCVLDVKMGTRQYGIMATEKKKASQTKKCAMTTSRVLGVRICGMQVWHPWLQSYTFEDKYVGRDIKAGEEFQHALMRYLGKTDDDEDNSHLLVHHIPTIIRKLEQLEQIVRFLKGSRLYASSLLFLYDGEPPPSDKSSKEKVKPREIDIRIVDFANCVFAEDKELLAKATCPPQHKDTYDRGYVRGLRTLRLYFLKIWKEAKGMQIAERGYEDSLSNAYDELGGLMSYSNDDDSCGETST</sequence>
<dbReference type="EC" id="2.7.-.-"/>
<dbReference type="EMBL" id="CU329672">
    <property type="protein sequence ID" value="CAA20701.1"/>
    <property type="molecule type" value="Genomic_DNA"/>
</dbReference>
<dbReference type="PIR" id="T41672">
    <property type="entry name" value="T41672"/>
</dbReference>
<dbReference type="SMR" id="O74561"/>
<dbReference type="BioGRID" id="275482">
    <property type="interactions" value="1"/>
</dbReference>
<dbReference type="FunCoup" id="O74561">
    <property type="interactions" value="323"/>
</dbReference>
<dbReference type="STRING" id="284812.O74561"/>
<dbReference type="iPTMnet" id="O74561"/>
<dbReference type="PaxDb" id="4896-SPCC970.08.1"/>
<dbReference type="EnsemblFungi" id="SPCC970.08.1">
    <property type="protein sequence ID" value="SPCC970.08.1:pep"/>
    <property type="gene ID" value="SPCC970.08"/>
</dbReference>
<dbReference type="KEGG" id="spo:2538905"/>
<dbReference type="PomBase" id="SPCC970.08"/>
<dbReference type="VEuPathDB" id="FungiDB:SPCC970.08"/>
<dbReference type="eggNOG" id="KOG1620">
    <property type="taxonomic scope" value="Eukaryota"/>
</dbReference>
<dbReference type="HOGENOM" id="CLU_306329_0_0_1"/>
<dbReference type="InParanoid" id="O74561"/>
<dbReference type="OMA" id="HIFPEWM"/>
<dbReference type="PhylomeDB" id="O74561"/>
<dbReference type="Reactome" id="R-SPO-1855167">
    <property type="pathway name" value="Synthesis of pyrophosphates in the cytosol"/>
</dbReference>
<dbReference type="Reactome" id="R-SPO-1855191">
    <property type="pathway name" value="Synthesis of IPs in the nucleus"/>
</dbReference>
<dbReference type="PRO" id="PR:O74561"/>
<dbReference type="Proteomes" id="UP000002485">
    <property type="component" value="Chromosome III"/>
</dbReference>
<dbReference type="GO" id="GO:0005737">
    <property type="term" value="C:cytoplasm"/>
    <property type="evidence" value="ECO:0000318"/>
    <property type="project" value="GO_Central"/>
</dbReference>
<dbReference type="GO" id="GO:0005829">
    <property type="term" value="C:cytosol"/>
    <property type="evidence" value="ECO:0007005"/>
    <property type="project" value="PomBase"/>
</dbReference>
<dbReference type="GO" id="GO:0005634">
    <property type="term" value="C:nucleus"/>
    <property type="evidence" value="ECO:0000318"/>
    <property type="project" value="GO_Central"/>
</dbReference>
<dbReference type="GO" id="GO:0000824">
    <property type="term" value="F:inositol-1,4,5,6-tetrakisphosphate 3-kinase activity"/>
    <property type="evidence" value="ECO:0000318"/>
    <property type="project" value="GO_Central"/>
</dbReference>
<dbReference type="GO" id="GO:0008440">
    <property type="term" value="F:inositol-1,4,5-trisphosphate 3-kinase activity"/>
    <property type="evidence" value="ECO:0000318"/>
    <property type="project" value="GO_Central"/>
</dbReference>
<dbReference type="GO" id="GO:0032958">
    <property type="term" value="P:inositol phosphate biosynthetic process"/>
    <property type="evidence" value="ECO:0000318"/>
    <property type="project" value="GO_Central"/>
</dbReference>
<dbReference type="GO" id="GO:0006661">
    <property type="term" value="P:phosphatidylinositol biosynthetic process"/>
    <property type="evidence" value="ECO:0000266"/>
    <property type="project" value="PomBase"/>
</dbReference>
<dbReference type="GO" id="GO:0046854">
    <property type="term" value="P:phosphatidylinositol phosphate biosynthetic process"/>
    <property type="evidence" value="ECO:0000318"/>
    <property type="project" value="GO_Central"/>
</dbReference>
<dbReference type="GO" id="GO:0023052">
    <property type="term" value="P:signaling"/>
    <property type="evidence" value="ECO:0000303"/>
    <property type="project" value="PomBase"/>
</dbReference>
<dbReference type="Gene3D" id="3.30.470.160">
    <property type="entry name" value="Inositol polyphosphate kinase"/>
    <property type="match status" value="1"/>
</dbReference>
<dbReference type="InterPro" id="IPR005522">
    <property type="entry name" value="IPK"/>
</dbReference>
<dbReference type="InterPro" id="IPR038286">
    <property type="entry name" value="IPK_sf"/>
</dbReference>
<dbReference type="PANTHER" id="PTHR12400">
    <property type="entry name" value="INOSITOL POLYPHOSPHATE KINASE"/>
    <property type="match status" value="1"/>
</dbReference>
<dbReference type="PANTHER" id="PTHR12400:SF21">
    <property type="entry name" value="KINASE"/>
    <property type="match status" value="1"/>
</dbReference>
<dbReference type="Pfam" id="PF03770">
    <property type="entry name" value="IPK"/>
    <property type="match status" value="1"/>
</dbReference>
<dbReference type="SUPFAM" id="SSF56104">
    <property type="entry name" value="SAICAR synthase-like"/>
    <property type="match status" value="1"/>
</dbReference>
<reference evidence="7" key="1">
    <citation type="journal article" date="2002" name="Nature">
        <title>The genome sequence of Schizosaccharomyces pombe.</title>
        <authorList>
            <person name="Wood V."/>
            <person name="Gwilliam R."/>
            <person name="Rajandream M.A."/>
            <person name="Lyne M.H."/>
            <person name="Lyne R."/>
            <person name="Stewart A."/>
            <person name="Sgouros J.G."/>
            <person name="Peat N."/>
            <person name="Hayles J."/>
            <person name="Baker S.G."/>
            <person name="Basham D."/>
            <person name="Bowman S."/>
            <person name="Brooks K."/>
            <person name="Brown D."/>
            <person name="Brown S."/>
            <person name="Chillingworth T."/>
            <person name="Churcher C.M."/>
            <person name="Collins M."/>
            <person name="Connor R."/>
            <person name="Cronin A."/>
            <person name="Davis P."/>
            <person name="Feltwell T."/>
            <person name="Fraser A."/>
            <person name="Gentles S."/>
            <person name="Goble A."/>
            <person name="Hamlin N."/>
            <person name="Harris D.E."/>
            <person name="Hidalgo J."/>
            <person name="Hodgson G."/>
            <person name="Holroyd S."/>
            <person name="Hornsby T."/>
            <person name="Howarth S."/>
            <person name="Huckle E.J."/>
            <person name="Hunt S."/>
            <person name="Jagels K."/>
            <person name="James K.D."/>
            <person name="Jones L."/>
            <person name="Jones M."/>
            <person name="Leather S."/>
            <person name="McDonald S."/>
            <person name="McLean J."/>
            <person name="Mooney P."/>
            <person name="Moule S."/>
            <person name="Mungall K.L."/>
            <person name="Murphy L.D."/>
            <person name="Niblett D."/>
            <person name="Odell C."/>
            <person name="Oliver K."/>
            <person name="O'Neil S."/>
            <person name="Pearson D."/>
            <person name="Quail M.A."/>
            <person name="Rabbinowitsch E."/>
            <person name="Rutherford K.M."/>
            <person name="Rutter S."/>
            <person name="Saunders D."/>
            <person name="Seeger K."/>
            <person name="Sharp S."/>
            <person name="Skelton J."/>
            <person name="Simmonds M.N."/>
            <person name="Squares R."/>
            <person name="Squares S."/>
            <person name="Stevens K."/>
            <person name="Taylor K."/>
            <person name="Taylor R.G."/>
            <person name="Tivey A."/>
            <person name="Walsh S.V."/>
            <person name="Warren T."/>
            <person name="Whitehead S."/>
            <person name="Woodward J.R."/>
            <person name="Volckaert G."/>
            <person name="Aert R."/>
            <person name="Robben J."/>
            <person name="Grymonprez B."/>
            <person name="Weltjens I."/>
            <person name="Vanstreels E."/>
            <person name="Rieger M."/>
            <person name="Schaefer M."/>
            <person name="Mueller-Auer S."/>
            <person name="Gabel C."/>
            <person name="Fuchs M."/>
            <person name="Duesterhoeft A."/>
            <person name="Fritzc C."/>
            <person name="Holzer E."/>
            <person name="Moestl D."/>
            <person name="Hilbert H."/>
            <person name="Borzym K."/>
            <person name="Langer I."/>
            <person name="Beck A."/>
            <person name="Lehrach H."/>
            <person name="Reinhardt R."/>
            <person name="Pohl T.M."/>
            <person name="Eger P."/>
            <person name="Zimmermann W."/>
            <person name="Wedler H."/>
            <person name="Wambutt R."/>
            <person name="Purnelle B."/>
            <person name="Goffeau A."/>
            <person name="Cadieu E."/>
            <person name="Dreano S."/>
            <person name="Gloux S."/>
            <person name="Lelaure V."/>
            <person name="Mottier S."/>
            <person name="Galibert F."/>
            <person name="Aves S.J."/>
            <person name="Xiang Z."/>
            <person name="Hunt C."/>
            <person name="Moore K."/>
            <person name="Hurst S.M."/>
            <person name="Lucas M."/>
            <person name="Rochet M."/>
            <person name="Gaillardin C."/>
            <person name="Tallada V.A."/>
            <person name="Garzon A."/>
            <person name="Thode G."/>
            <person name="Daga R.R."/>
            <person name="Cruzado L."/>
            <person name="Jimenez J."/>
            <person name="Sanchez M."/>
            <person name="del Rey F."/>
            <person name="Benito J."/>
            <person name="Dominguez A."/>
            <person name="Revuelta J.L."/>
            <person name="Moreno S."/>
            <person name="Armstrong J."/>
            <person name="Forsburg S.L."/>
            <person name="Cerutti L."/>
            <person name="Lowe T."/>
            <person name="McCombie W.R."/>
            <person name="Paulsen I."/>
            <person name="Potashkin J."/>
            <person name="Shpakovski G.V."/>
            <person name="Ussery D."/>
            <person name="Barrell B.G."/>
            <person name="Nurse P."/>
        </authorList>
    </citation>
    <scope>NUCLEOTIDE SEQUENCE [LARGE SCALE GENOMIC DNA]</scope>
    <source>
        <strain>972 / ATCC 24843</strain>
    </source>
</reference>
<reference evidence="6" key="2">
    <citation type="journal article" date="2006" name="Nat. Biotechnol.">
        <title>ORFeome cloning and global analysis of protein localization in the fission yeast Schizosaccharomyces pombe.</title>
        <authorList>
            <person name="Matsuyama A."/>
            <person name="Arai R."/>
            <person name="Yashiroda Y."/>
            <person name="Shirai A."/>
            <person name="Kamata A."/>
            <person name="Sekido S."/>
            <person name="Kobayashi Y."/>
            <person name="Hashimoto A."/>
            <person name="Hamamoto M."/>
            <person name="Hiraoka Y."/>
            <person name="Horinouchi S."/>
            <person name="Yoshida M."/>
        </authorList>
    </citation>
    <scope>SUBCELLULAR LOCATION [LARGE SCALE ANALYSIS]</scope>
</reference>
<reference key="3">
    <citation type="journal article" date="2008" name="J. Proteome Res.">
        <title>Phosphoproteome analysis of fission yeast.</title>
        <authorList>
            <person name="Wilson-Grady J.T."/>
            <person name="Villen J."/>
            <person name="Gygi S.P."/>
        </authorList>
    </citation>
    <scope>PHOSPHORYLATION [LARGE SCALE ANALYSIS] AT SER-86 AND SER-585</scope>
    <scope>IDENTIFICATION BY MASS SPECTROMETRY</scope>
</reference>
<organism>
    <name type="scientific">Schizosaccharomyces pombe (strain 972 / ATCC 24843)</name>
    <name type="common">Fission yeast</name>
    <dbReference type="NCBI Taxonomy" id="284812"/>
    <lineage>
        <taxon>Eukaryota</taxon>
        <taxon>Fungi</taxon>
        <taxon>Dikarya</taxon>
        <taxon>Ascomycota</taxon>
        <taxon>Taphrinomycotina</taxon>
        <taxon>Schizosaccharomycetes</taxon>
        <taxon>Schizosaccharomycetales</taxon>
        <taxon>Schizosaccharomycetaceae</taxon>
        <taxon>Schizosaccharomyces</taxon>
    </lineage>
</organism>
<gene>
    <name type="ORF">SPCC970.08</name>
</gene>
<keyword id="KW-0963">Cytoplasm</keyword>
<keyword id="KW-0418">Kinase</keyword>
<keyword id="KW-0597">Phosphoprotein</keyword>
<keyword id="KW-1185">Reference proteome</keyword>
<keyword id="KW-0808">Transferase</keyword>
<protein>
    <recommendedName>
        <fullName>Uncharacterized inositol polyphosphate kinase C970.08</fullName>
        <ecNumber>2.7.-.-</ecNumber>
    </recommendedName>
</protein>
<accession>O74561</accession>
<feature type="chain" id="PRO_0000318136" description="Uncharacterized inositol polyphosphate kinase C970.08">
    <location>
        <begin position="1"/>
        <end position="967"/>
    </location>
</feature>
<feature type="region of interest" description="Disordered" evidence="3">
    <location>
        <begin position="1"/>
        <end position="23"/>
    </location>
</feature>
<feature type="region of interest" description="Disordered" evidence="3">
    <location>
        <begin position="41"/>
        <end position="72"/>
    </location>
</feature>
<feature type="region of interest" description="Disordered" evidence="3">
    <location>
        <begin position="135"/>
        <end position="259"/>
    </location>
</feature>
<feature type="region of interest" description="Disordered" evidence="3">
    <location>
        <begin position="271"/>
        <end position="296"/>
    </location>
</feature>
<feature type="region of interest" description="Disordered" evidence="3">
    <location>
        <begin position="380"/>
        <end position="399"/>
    </location>
</feature>
<feature type="region of interest" description="Disordered" evidence="3">
    <location>
        <begin position="437"/>
        <end position="464"/>
    </location>
</feature>
<feature type="region of interest" description="Disordered" evidence="3">
    <location>
        <begin position="499"/>
        <end position="544"/>
    </location>
</feature>
<feature type="region of interest" description="Disordered" evidence="3">
    <location>
        <begin position="594"/>
        <end position="665"/>
    </location>
</feature>
<feature type="region of interest" description="Disordered" evidence="3">
    <location>
        <begin position="681"/>
        <end position="708"/>
    </location>
</feature>
<feature type="compositionally biased region" description="Basic and acidic residues" evidence="3">
    <location>
        <begin position="14"/>
        <end position="23"/>
    </location>
</feature>
<feature type="compositionally biased region" description="Polar residues" evidence="3">
    <location>
        <begin position="60"/>
        <end position="72"/>
    </location>
</feature>
<feature type="compositionally biased region" description="Polar residues" evidence="3">
    <location>
        <begin position="162"/>
        <end position="187"/>
    </location>
</feature>
<feature type="compositionally biased region" description="Basic and acidic residues" evidence="3">
    <location>
        <begin position="205"/>
        <end position="218"/>
    </location>
</feature>
<feature type="compositionally biased region" description="Basic residues" evidence="3">
    <location>
        <begin position="221"/>
        <end position="234"/>
    </location>
</feature>
<feature type="compositionally biased region" description="Low complexity" evidence="3">
    <location>
        <begin position="278"/>
        <end position="294"/>
    </location>
</feature>
<feature type="compositionally biased region" description="Polar residues" evidence="3">
    <location>
        <begin position="382"/>
        <end position="394"/>
    </location>
</feature>
<feature type="compositionally biased region" description="Basic residues" evidence="3">
    <location>
        <begin position="499"/>
        <end position="508"/>
    </location>
</feature>
<feature type="compositionally biased region" description="Basic and acidic residues" evidence="3">
    <location>
        <begin position="608"/>
        <end position="622"/>
    </location>
</feature>
<feature type="compositionally biased region" description="Low complexity" evidence="3">
    <location>
        <begin position="686"/>
        <end position="704"/>
    </location>
</feature>
<feature type="binding site" evidence="1">
    <location>
        <begin position="728"/>
        <end position="736"/>
    </location>
    <ligand>
        <name>substrate</name>
    </ligand>
</feature>
<feature type="modified residue" description="Phosphoserine" evidence="5">
    <location>
        <position position="86"/>
    </location>
</feature>
<feature type="modified residue" description="Phosphoserine" evidence="5">
    <location>
        <position position="585"/>
    </location>
</feature>